<protein>
    <recommendedName>
        <fullName evidence="1">DNA topoisomerase 4 subunit A</fullName>
        <ecNumber evidence="1">5.6.2.2</ecNumber>
    </recommendedName>
    <alternativeName>
        <fullName evidence="1">Topoisomerase IV subunit A</fullName>
    </alternativeName>
</protein>
<keyword id="KW-1003">Cell membrane</keyword>
<keyword id="KW-0238">DNA-binding</keyword>
<keyword id="KW-0413">Isomerase</keyword>
<keyword id="KW-0472">Membrane</keyword>
<keyword id="KW-0799">Topoisomerase</keyword>
<dbReference type="EC" id="5.6.2.2" evidence="1"/>
<dbReference type="EMBL" id="U08907">
    <property type="protein sequence ID" value="AAA82151.1"/>
    <property type="molecule type" value="Genomic_DNA"/>
</dbReference>
<dbReference type="PIR" id="S60780">
    <property type="entry name" value="S60780"/>
</dbReference>
<dbReference type="SMR" id="P48374"/>
<dbReference type="ChEMBL" id="CHEMBL2363077"/>
<dbReference type="DrugCentral" id="P48374"/>
<dbReference type="GO" id="GO:0005694">
    <property type="term" value="C:chromosome"/>
    <property type="evidence" value="ECO:0007669"/>
    <property type="project" value="InterPro"/>
</dbReference>
<dbReference type="GO" id="GO:0005737">
    <property type="term" value="C:cytoplasm"/>
    <property type="evidence" value="ECO:0007669"/>
    <property type="project" value="TreeGrafter"/>
</dbReference>
<dbReference type="GO" id="GO:0009330">
    <property type="term" value="C:DNA topoisomerase type II (double strand cut, ATP-hydrolyzing) complex"/>
    <property type="evidence" value="ECO:0007669"/>
    <property type="project" value="TreeGrafter"/>
</dbReference>
<dbReference type="GO" id="GO:0019897">
    <property type="term" value="C:extrinsic component of plasma membrane"/>
    <property type="evidence" value="ECO:0007669"/>
    <property type="project" value="UniProtKB-UniRule"/>
</dbReference>
<dbReference type="GO" id="GO:0005524">
    <property type="term" value="F:ATP binding"/>
    <property type="evidence" value="ECO:0007669"/>
    <property type="project" value="InterPro"/>
</dbReference>
<dbReference type="GO" id="GO:0003677">
    <property type="term" value="F:DNA binding"/>
    <property type="evidence" value="ECO:0007669"/>
    <property type="project" value="UniProtKB-UniRule"/>
</dbReference>
<dbReference type="GO" id="GO:0003918">
    <property type="term" value="F:DNA topoisomerase type II (double strand cut, ATP-hydrolyzing) activity"/>
    <property type="evidence" value="ECO:0007669"/>
    <property type="project" value="UniProtKB-UniRule"/>
</dbReference>
<dbReference type="GO" id="GO:0007059">
    <property type="term" value="P:chromosome segregation"/>
    <property type="evidence" value="ECO:0007669"/>
    <property type="project" value="UniProtKB-UniRule"/>
</dbReference>
<dbReference type="GO" id="GO:0006265">
    <property type="term" value="P:DNA topological change"/>
    <property type="evidence" value="ECO:0007669"/>
    <property type="project" value="UniProtKB-UniRule"/>
</dbReference>
<dbReference type="CDD" id="cd00187">
    <property type="entry name" value="TOP4c"/>
    <property type="match status" value="1"/>
</dbReference>
<dbReference type="FunFam" id="1.10.268.10:FF:000001">
    <property type="entry name" value="DNA gyrase subunit A"/>
    <property type="match status" value="1"/>
</dbReference>
<dbReference type="FunFam" id="3.30.1360.40:FF:000017">
    <property type="entry name" value="DNA topoisomerase 4 subunit A"/>
    <property type="match status" value="1"/>
</dbReference>
<dbReference type="Gene3D" id="3.30.1360.40">
    <property type="match status" value="1"/>
</dbReference>
<dbReference type="Gene3D" id="2.120.10.90">
    <property type="entry name" value="DNA gyrase/topoisomerase IV, subunit A, C-terminal"/>
    <property type="match status" value="1"/>
</dbReference>
<dbReference type="Gene3D" id="3.90.199.10">
    <property type="entry name" value="Topoisomerase II, domain 5"/>
    <property type="match status" value="1"/>
</dbReference>
<dbReference type="Gene3D" id="1.10.268.10">
    <property type="entry name" value="Topoisomerase, domain 3"/>
    <property type="match status" value="1"/>
</dbReference>
<dbReference type="HAMAP" id="MF_00936">
    <property type="entry name" value="ParC_type1"/>
    <property type="match status" value="1"/>
</dbReference>
<dbReference type="InterPro" id="IPR035516">
    <property type="entry name" value="Gyrase/topoIV_suA_C"/>
</dbReference>
<dbReference type="InterPro" id="IPR013760">
    <property type="entry name" value="Topo_IIA-like_dom_sf"/>
</dbReference>
<dbReference type="InterPro" id="IPR013758">
    <property type="entry name" value="Topo_IIA_A/C_ab"/>
</dbReference>
<dbReference type="InterPro" id="IPR013757">
    <property type="entry name" value="Topo_IIA_A_a_sf"/>
</dbReference>
<dbReference type="InterPro" id="IPR002205">
    <property type="entry name" value="Topo_IIA_dom_A"/>
</dbReference>
<dbReference type="InterPro" id="IPR005742">
    <property type="entry name" value="TopoIV_A_Gneg"/>
</dbReference>
<dbReference type="InterPro" id="IPR050220">
    <property type="entry name" value="Type_II_DNA_Topoisomerases"/>
</dbReference>
<dbReference type="NCBIfam" id="TIGR01062">
    <property type="entry name" value="parC_Gneg"/>
    <property type="match status" value="1"/>
</dbReference>
<dbReference type="NCBIfam" id="NF004044">
    <property type="entry name" value="PRK05561.1"/>
    <property type="match status" value="1"/>
</dbReference>
<dbReference type="PANTHER" id="PTHR43493">
    <property type="entry name" value="DNA GYRASE/TOPOISOMERASE SUBUNIT A"/>
    <property type="match status" value="1"/>
</dbReference>
<dbReference type="PANTHER" id="PTHR43493:SF1">
    <property type="entry name" value="DNA TOPOISOMERASE 4 SUBUNIT A"/>
    <property type="match status" value="1"/>
</dbReference>
<dbReference type="Pfam" id="PF00521">
    <property type="entry name" value="DNA_topoisoIV"/>
    <property type="match status" value="1"/>
</dbReference>
<dbReference type="SMART" id="SM00434">
    <property type="entry name" value="TOP4c"/>
    <property type="match status" value="1"/>
</dbReference>
<dbReference type="SUPFAM" id="SSF101904">
    <property type="entry name" value="GyrA/ParC C-terminal domain-like"/>
    <property type="match status" value="1"/>
</dbReference>
<dbReference type="SUPFAM" id="SSF56719">
    <property type="entry name" value="Type II DNA topoisomerase"/>
    <property type="match status" value="1"/>
</dbReference>
<dbReference type="PROSITE" id="PS52040">
    <property type="entry name" value="TOPO_IIA"/>
    <property type="match status" value="1"/>
</dbReference>
<sequence>MNTQPHASHTDSNTLMLGRYAERAYLEYAMSVVKGRALPEVSDGQKPVQRRILFAMRDMGLTAGAKPVKSARVVGEILGKYHPHGDSSAYEAMVRMAQDFTLRYPLIDGIGNFGSRDGDGAAAMRYTEARLTPIAELLLSEINQGTVDFMPNYDGAFDEPLHLPARLPMVLLNGASGIAVGMATEIPSHNLNEVTQAAIALLKKPTLETADLMQYIPAPDFAGGGQIITPADELRRIYETGKGSVRVRARYEIEKLARGQWRVIVTELPPNANSAKILAEIEEQTNPKPKAGKKQLNQDRLNTKKLMLDLIDRVRDESDGEHPVRLVFEPKSSRIDTDTFINTLMAQTSLEGNVSMNLVMMGLDNRPAQKNLKTILQEWLDFRIVTVTRRLKFRLNQVEKRLHILEGRLKVFLHIDEVIKVIRESDDPKADLMAVFGLTEIQAEDILEIRLRQLARLEGFKLEKELNELREEQGRLNIFLGDENEKRKLIIKEMQADMKQFGDARRTLVEEAGRAVLTQTAADEPITLILSEKGWIRSRAGHNLDLSQTAFKEGDRLKQTLEGPHCFTRRHPRFIRGRTYSIDAAEIPGGRGDGVPVSSLIELQNGAKPVAMLTGLPEQHYLLSSSGGYGFIAKLGDMVGRVKAGKVVMTADSGETVLPPVAVYASSFINPDCKIIAATSQNRALAFPIGELKIMAKGKGLQIIGLNAGESMTHTAVSSEPEILIESEGRRGAAHKDRLPVALIEAKRGKKGRLLPISGSLKQLSSPK</sequence>
<feature type="chain" id="PRO_0000145403" description="DNA topoisomerase 4 subunit A">
    <location>
        <begin position="1"/>
        <end position="768"/>
    </location>
</feature>
<feature type="domain" description="Topo IIA-type catalytic" evidence="2">
    <location>
        <begin position="38"/>
        <end position="521"/>
    </location>
</feature>
<feature type="active site" description="O-(5'-phospho-DNA)-tyrosine intermediate" evidence="1">
    <location>
        <position position="126"/>
    </location>
</feature>
<feature type="site" description="Interaction with DNA" evidence="1">
    <location>
        <position position="46"/>
    </location>
</feature>
<feature type="site" description="Interaction with DNA" evidence="1">
    <location>
        <position position="82"/>
    </location>
</feature>
<feature type="site" description="Interaction with DNA" evidence="1">
    <location>
        <position position="84"/>
    </location>
</feature>
<feature type="site" description="Transition state stabilizer" evidence="1">
    <location>
        <position position="125"/>
    </location>
</feature>
<comment type="function">
    <text evidence="1">Topoisomerase IV is essential for chromosome segregation. It relaxes supercoiled DNA. Performs the decatenation events required during the replication of a circular DNA molecule.</text>
</comment>
<comment type="catalytic activity">
    <reaction evidence="1">
        <text>ATP-dependent breakage, passage and rejoining of double-stranded DNA.</text>
        <dbReference type="EC" id="5.6.2.2"/>
    </reaction>
</comment>
<comment type="subunit">
    <text>Heterotetramer composed of ParC and ParE.</text>
</comment>
<comment type="subcellular location">
    <subcellularLocation>
        <location evidence="1">Cell membrane</location>
        <topology evidence="1">Peripheral membrane protein</topology>
    </subcellularLocation>
</comment>
<comment type="similarity">
    <text evidence="1">Belongs to the type II topoisomerase GyrA/ParC subunit family. ParC type 1 subfamily.</text>
</comment>
<name>PARC_NEIGO</name>
<accession>P48374</accession>
<proteinExistence type="inferred from homology"/>
<reference key="1">
    <citation type="journal article" date="1994" name="Mol. Microbiol.">
        <title>Neisseria gonorrhoeae acquires mutations in analogous regions of gyrA and parC in fluoroquinolone-resistant isolates.</title>
        <authorList>
            <person name="Belland R.J."/>
            <person name="Morrison S.G."/>
            <person name="Ison C."/>
            <person name="Huang W.M."/>
        </authorList>
    </citation>
    <scope>NUCLEOTIDE SEQUENCE [GENOMIC DNA]</scope>
    <source>
        <strain>MS11</strain>
    </source>
</reference>
<reference key="2">
    <citation type="submission" date="1994-04" db="EMBL/GenBank/DDBJ databases">
        <authorList>
            <person name="Belland R.J."/>
        </authorList>
    </citation>
    <scope>NUCLEOTIDE SEQUENCE [GENOMIC DNA]</scope>
    <source>
        <strain>MS11</strain>
    </source>
</reference>
<evidence type="ECO:0000255" key="1">
    <source>
        <dbReference type="HAMAP-Rule" id="MF_00936"/>
    </source>
</evidence>
<evidence type="ECO:0000255" key="2">
    <source>
        <dbReference type="PROSITE-ProRule" id="PRU01384"/>
    </source>
</evidence>
<gene>
    <name evidence="1" type="primary">parC</name>
</gene>
<organism>
    <name type="scientific">Neisseria gonorrhoeae</name>
    <dbReference type="NCBI Taxonomy" id="485"/>
    <lineage>
        <taxon>Bacteria</taxon>
        <taxon>Pseudomonadati</taxon>
        <taxon>Pseudomonadota</taxon>
        <taxon>Betaproteobacteria</taxon>
        <taxon>Neisseriales</taxon>
        <taxon>Neisseriaceae</taxon>
        <taxon>Neisseria</taxon>
    </lineage>
</organism>